<sequence>MNHATSELHDESAVTSVPETTRLQDLKALVKMGIVNSNTLTVFTGFWLALHFNGLSVMDNLDKLFFTIVGSGLVMAGVCCLNNYIDRDIDPLMERTKTRPTVTGKYKPGFALTFGLVILLLGFVFLLLTTPMAVLMGFIGAFTYVVLYSLWTKRKYTLNTVVGSISGAVPPLIGWAAIDPSLGHPIAWMLFLIMFIWQIPHFLALAMKRVDEYRNAGIPMLPVVHGFEITKRQIMIWTVCLLPLPFYMSGLGITFMVIATLLNIGWIVLGFYGFRKKDDIKWSVQMFVYSLNYLTILFVSMIVVTFF</sequence>
<feature type="chain" id="PRO_0000327003" description="Protoheme IX farnesyltransferase">
    <location>
        <begin position="1"/>
        <end position="307"/>
    </location>
</feature>
<feature type="transmembrane region" description="Helical" evidence="1">
    <location>
        <begin position="32"/>
        <end position="52"/>
    </location>
</feature>
<feature type="transmembrane region" description="Helical" evidence="1">
    <location>
        <begin position="65"/>
        <end position="85"/>
    </location>
</feature>
<feature type="transmembrane region" description="Helical" evidence="1">
    <location>
        <begin position="108"/>
        <end position="128"/>
    </location>
</feature>
<feature type="transmembrane region" description="Helical" evidence="1">
    <location>
        <begin position="131"/>
        <end position="151"/>
    </location>
</feature>
<feature type="transmembrane region" description="Helical" evidence="1">
    <location>
        <begin position="158"/>
        <end position="178"/>
    </location>
</feature>
<feature type="transmembrane region" description="Helical" evidence="1">
    <location>
        <begin position="186"/>
        <end position="206"/>
    </location>
</feature>
<feature type="transmembrane region" description="Helical" evidence="1">
    <location>
        <begin position="251"/>
        <end position="271"/>
    </location>
</feature>
<feature type="transmembrane region" description="Helical" evidence="1">
    <location>
        <begin position="287"/>
        <end position="307"/>
    </location>
</feature>
<name>COXX_BACCR</name>
<evidence type="ECO:0000255" key="1">
    <source>
        <dbReference type="HAMAP-Rule" id="MF_00154"/>
    </source>
</evidence>
<evidence type="ECO:0000305" key="2"/>
<comment type="function">
    <text evidence="1">Converts heme B (protoheme IX) to heme O by substitution of the vinyl group on carbon 2 of heme B porphyrin ring with a hydroxyethyl farnesyl side group.</text>
</comment>
<comment type="catalytic activity">
    <reaction evidence="1">
        <text>heme b + (2E,6E)-farnesyl diphosphate + H2O = Fe(II)-heme o + diphosphate</text>
        <dbReference type="Rhea" id="RHEA:28070"/>
        <dbReference type="ChEBI" id="CHEBI:15377"/>
        <dbReference type="ChEBI" id="CHEBI:33019"/>
        <dbReference type="ChEBI" id="CHEBI:60344"/>
        <dbReference type="ChEBI" id="CHEBI:60530"/>
        <dbReference type="ChEBI" id="CHEBI:175763"/>
        <dbReference type="EC" id="2.5.1.141"/>
    </reaction>
</comment>
<comment type="pathway">
    <text evidence="1">Porphyrin-containing compound metabolism; heme O biosynthesis; heme O from protoheme: step 1/1.</text>
</comment>
<comment type="subunit">
    <text evidence="1">Interacts with CtaA.</text>
</comment>
<comment type="subcellular location">
    <subcellularLocation>
        <location evidence="1">Cell membrane</location>
        <topology evidence="1">Multi-pass membrane protein</topology>
    </subcellularLocation>
</comment>
<comment type="miscellaneous">
    <text evidence="1">Carbon 2 of the heme B porphyrin ring is defined according to the Fischer nomenclature.</text>
</comment>
<comment type="similarity">
    <text evidence="1">Belongs to the UbiA prenyltransferase family. Protoheme IX farnesyltransferase subfamily.</text>
</comment>
<comment type="sequence caution" evidence="2">
    <conflict type="erroneous initiation">
        <sequence resource="EMBL-CDS" id="AAP10865"/>
    </conflict>
</comment>
<gene>
    <name evidence="1" type="primary">ctaB</name>
    <name type="ordered locus">BC_3945</name>
</gene>
<accession>Q819N1</accession>
<keyword id="KW-1003">Cell membrane</keyword>
<keyword id="KW-0350">Heme biosynthesis</keyword>
<keyword id="KW-0472">Membrane</keyword>
<keyword id="KW-1185">Reference proteome</keyword>
<keyword id="KW-0808">Transferase</keyword>
<keyword id="KW-0812">Transmembrane</keyword>
<keyword id="KW-1133">Transmembrane helix</keyword>
<dbReference type="EC" id="2.5.1.141" evidence="1"/>
<dbReference type="EMBL" id="AE016877">
    <property type="protein sequence ID" value="AAP10865.1"/>
    <property type="status" value="ALT_INIT"/>
    <property type="molecule type" value="Genomic_DNA"/>
</dbReference>
<dbReference type="RefSeq" id="NP_833664.1">
    <property type="nucleotide sequence ID" value="NC_004722.1"/>
</dbReference>
<dbReference type="RefSeq" id="WP_001015058.1">
    <property type="nucleotide sequence ID" value="NZ_CP138336.1"/>
</dbReference>
<dbReference type="SMR" id="Q819N1"/>
<dbReference type="STRING" id="226900.BC_3945"/>
<dbReference type="GeneID" id="93007167"/>
<dbReference type="KEGG" id="bce:BC3945"/>
<dbReference type="PATRIC" id="fig|226900.8.peg.4069"/>
<dbReference type="HOGENOM" id="CLU_029631_0_0_9"/>
<dbReference type="OrthoDB" id="9814417at2"/>
<dbReference type="UniPathway" id="UPA00834">
    <property type="reaction ID" value="UER00712"/>
</dbReference>
<dbReference type="Proteomes" id="UP000001417">
    <property type="component" value="Chromosome"/>
</dbReference>
<dbReference type="GO" id="GO:0005886">
    <property type="term" value="C:plasma membrane"/>
    <property type="evidence" value="ECO:0000318"/>
    <property type="project" value="GO_Central"/>
</dbReference>
<dbReference type="GO" id="GO:0008495">
    <property type="term" value="F:protoheme IX farnesyltransferase activity"/>
    <property type="evidence" value="ECO:0000318"/>
    <property type="project" value="GO_Central"/>
</dbReference>
<dbReference type="GO" id="GO:0048034">
    <property type="term" value="P:heme O biosynthetic process"/>
    <property type="evidence" value="ECO:0000318"/>
    <property type="project" value="GO_Central"/>
</dbReference>
<dbReference type="CDD" id="cd13957">
    <property type="entry name" value="PT_UbiA_Cox10"/>
    <property type="match status" value="1"/>
</dbReference>
<dbReference type="FunFam" id="1.10.357.140:FF:000001">
    <property type="entry name" value="Protoheme IX farnesyltransferase"/>
    <property type="match status" value="1"/>
</dbReference>
<dbReference type="Gene3D" id="1.10.357.140">
    <property type="entry name" value="UbiA prenyltransferase"/>
    <property type="match status" value="1"/>
</dbReference>
<dbReference type="HAMAP" id="MF_00154">
    <property type="entry name" value="CyoE_CtaB"/>
    <property type="match status" value="1"/>
</dbReference>
<dbReference type="InterPro" id="IPR006369">
    <property type="entry name" value="Protohaem_IX_farnesylTrfase"/>
</dbReference>
<dbReference type="InterPro" id="IPR000537">
    <property type="entry name" value="UbiA_prenyltransferase"/>
</dbReference>
<dbReference type="InterPro" id="IPR030470">
    <property type="entry name" value="UbiA_prenylTrfase_CS"/>
</dbReference>
<dbReference type="InterPro" id="IPR044878">
    <property type="entry name" value="UbiA_sf"/>
</dbReference>
<dbReference type="NCBIfam" id="TIGR01473">
    <property type="entry name" value="cyoE_ctaB"/>
    <property type="match status" value="1"/>
</dbReference>
<dbReference type="PANTHER" id="PTHR43448">
    <property type="entry name" value="PROTOHEME IX FARNESYLTRANSFERASE, MITOCHONDRIAL"/>
    <property type="match status" value="1"/>
</dbReference>
<dbReference type="PANTHER" id="PTHR43448:SF2">
    <property type="entry name" value="PROTOHEME IX FARNESYLTRANSFERASE, MITOCHONDRIAL"/>
    <property type="match status" value="1"/>
</dbReference>
<dbReference type="Pfam" id="PF01040">
    <property type="entry name" value="UbiA"/>
    <property type="match status" value="1"/>
</dbReference>
<dbReference type="PROSITE" id="PS00943">
    <property type="entry name" value="UBIA"/>
    <property type="match status" value="1"/>
</dbReference>
<reference key="1">
    <citation type="journal article" date="2003" name="Nature">
        <title>Genome sequence of Bacillus cereus and comparative analysis with Bacillus anthracis.</title>
        <authorList>
            <person name="Ivanova N."/>
            <person name="Sorokin A."/>
            <person name="Anderson I."/>
            <person name="Galleron N."/>
            <person name="Candelon B."/>
            <person name="Kapatral V."/>
            <person name="Bhattacharyya A."/>
            <person name="Reznik G."/>
            <person name="Mikhailova N."/>
            <person name="Lapidus A."/>
            <person name="Chu L."/>
            <person name="Mazur M."/>
            <person name="Goltsman E."/>
            <person name="Larsen N."/>
            <person name="D'Souza M."/>
            <person name="Walunas T."/>
            <person name="Grechkin Y."/>
            <person name="Pusch G."/>
            <person name="Haselkorn R."/>
            <person name="Fonstein M."/>
            <person name="Ehrlich S.D."/>
            <person name="Overbeek R."/>
            <person name="Kyrpides N.C."/>
        </authorList>
    </citation>
    <scope>NUCLEOTIDE SEQUENCE [LARGE SCALE GENOMIC DNA]</scope>
    <source>
        <strain>ATCC 14579 / DSM 31 / CCUG 7414 / JCM 2152 / NBRC 15305 / NCIMB 9373 / NCTC 2599 / NRRL B-3711</strain>
    </source>
</reference>
<protein>
    <recommendedName>
        <fullName evidence="1">Protoheme IX farnesyltransferase</fullName>
        <ecNumber evidence="1">2.5.1.141</ecNumber>
    </recommendedName>
    <alternativeName>
        <fullName evidence="1">Heme B farnesyltransferase</fullName>
    </alternativeName>
    <alternativeName>
        <fullName evidence="1">Heme O synthase</fullName>
    </alternativeName>
</protein>
<organism>
    <name type="scientific">Bacillus cereus (strain ATCC 14579 / DSM 31 / CCUG 7414 / JCM 2152 / NBRC 15305 / NCIMB 9373 / NCTC 2599 / NRRL B-3711)</name>
    <dbReference type="NCBI Taxonomy" id="226900"/>
    <lineage>
        <taxon>Bacteria</taxon>
        <taxon>Bacillati</taxon>
        <taxon>Bacillota</taxon>
        <taxon>Bacilli</taxon>
        <taxon>Bacillales</taxon>
        <taxon>Bacillaceae</taxon>
        <taxon>Bacillus</taxon>
        <taxon>Bacillus cereus group</taxon>
    </lineage>
</organism>
<proteinExistence type="inferred from homology"/>